<organism>
    <name type="scientific">Allorhizobium ampelinum (strain ATCC BAA-846 / DSM 112012 / S4)</name>
    <name type="common">Agrobacterium vitis (strain S4)</name>
    <dbReference type="NCBI Taxonomy" id="311402"/>
    <lineage>
        <taxon>Bacteria</taxon>
        <taxon>Pseudomonadati</taxon>
        <taxon>Pseudomonadota</taxon>
        <taxon>Alphaproteobacteria</taxon>
        <taxon>Hyphomicrobiales</taxon>
        <taxon>Rhizobiaceae</taxon>
        <taxon>Rhizobium/Agrobacterium group</taxon>
        <taxon>Allorhizobium</taxon>
        <taxon>Allorhizobium ampelinum</taxon>
    </lineage>
</organism>
<protein>
    <recommendedName>
        <fullName evidence="1">Small ribosomal subunit protein bS18</fullName>
    </recommendedName>
    <alternativeName>
        <fullName evidence="3">30S ribosomal protein S18</fullName>
    </alternativeName>
</protein>
<dbReference type="EMBL" id="CP000633">
    <property type="protein sequence ID" value="ACM36086.1"/>
    <property type="molecule type" value="Genomic_DNA"/>
</dbReference>
<dbReference type="RefSeq" id="WP_015915510.1">
    <property type="nucleotide sequence ID" value="NC_011989.1"/>
</dbReference>
<dbReference type="SMR" id="B9JUU1"/>
<dbReference type="STRING" id="311402.Avi_1519"/>
<dbReference type="GeneID" id="60682176"/>
<dbReference type="KEGG" id="avi:Avi_1519"/>
<dbReference type="eggNOG" id="COG0238">
    <property type="taxonomic scope" value="Bacteria"/>
</dbReference>
<dbReference type="HOGENOM" id="CLU_148710_2_2_5"/>
<dbReference type="Proteomes" id="UP000001596">
    <property type="component" value="Chromosome 1"/>
</dbReference>
<dbReference type="GO" id="GO:0022627">
    <property type="term" value="C:cytosolic small ribosomal subunit"/>
    <property type="evidence" value="ECO:0007669"/>
    <property type="project" value="TreeGrafter"/>
</dbReference>
<dbReference type="GO" id="GO:0070181">
    <property type="term" value="F:small ribosomal subunit rRNA binding"/>
    <property type="evidence" value="ECO:0007669"/>
    <property type="project" value="TreeGrafter"/>
</dbReference>
<dbReference type="GO" id="GO:0003735">
    <property type="term" value="F:structural constituent of ribosome"/>
    <property type="evidence" value="ECO:0007669"/>
    <property type="project" value="InterPro"/>
</dbReference>
<dbReference type="GO" id="GO:0006412">
    <property type="term" value="P:translation"/>
    <property type="evidence" value="ECO:0007669"/>
    <property type="project" value="UniProtKB-UniRule"/>
</dbReference>
<dbReference type="Gene3D" id="4.10.640.10">
    <property type="entry name" value="Ribosomal protein S18"/>
    <property type="match status" value="1"/>
</dbReference>
<dbReference type="HAMAP" id="MF_00270">
    <property type="entry name" value="Ribosomal_bS18"/>
    <property type="match status" value="1"/>
</dbReference>
<dbReference type="InterPro" id="IPR001648">
    <property type="entry name" value="Ribosomal_bS18"/>
</dbReference>
<dbReference type="InterPro" id="IPR018275">
    <property type="entry name" value="Ribosomal_bS18_CS"/>
</dbReference>
<dbReference type="InterPro" id="IPR036870">
    <property type="entry name" value="Ribosomal_bS18_sf"/>
</dbReference>
<dbReference type="NCBIfam" id="TIGR00165">
    <property type="entry name" value="S18"/>
    <property type="match status" value="1"/>
</dbReference>
<dbReference type="PANTHER" id="PTHR13479">
    <property type="entry name" value="30S RIBOSOMAL PROTEIN S18"/>
    <property type="match status" value="1"/>
</dbReference>
<dbReference type="PANTHER" id="PTHR13479:SF40">
    <property type="entry name" value="SMALL RIBOSOMAL SUBUNIT PROTEIN BS18M"/>
    <property type="match status" value="1"/>
</dbReference>
<dbReference type="Pfam" id="PF01084">
    <property type="entry name" value="Ribosomal_S18"/>
    <property type="match status" value="1"/>
</dbReference>
<dbReference type="PRINTS" id="PR00974">
    <property type="entry name" value="RIBOSOMALS18"/>
</dbReference>
<dbReference type="SUPFAM" id="SSF46911">
    <property type="entry name" value="Ribosomal protein S18"/>
    <property type="match status" value="1"/>
</dbReference>
<dbReference type="PROSITE" id="PS00057">
    <property type="entry name" value="RIBOSOMAL_S18"/>
    <property type="match status" value="1"/>
</dbReference>
<proteinExistence type="inferred from homology"/>
<reference key="1">
    <citation type="journal article" date="2009" name="J. Bacteriol.">
        <title>Genome sequences of three Agrobacterium biovars help elucidate the evolution of multichromosome genomes in bacteria.</title>
        <authorList>
            <person name="Slater S.C."/>
            <person name="Goldman B.S."/>
            <person name="Goodner B."/>
            <person name="Setubal J.C."/>
            <person name="Farrand S.K."/>
            <person name="Nester E.W."/>
            <person name="Burr T.J."/>
            <person name="Banta L."/>
            <person name="Dickerman A.W."/>
            <person name="Paulsen I."/>
            <person name="Otten L."/>
            <person name="Suen G."/>
            <person name="Welch R."/>
            <person name="Almeida N.F."/>
            <person name="Arnold F."/>
            <person name="Burton O.T."/>
            <person name="Du Z."/>
            <person name="Ewing A."/>
            <person name="Godsy E."/>
            <person name="Heisel S."/>
            <person name="Houmiel K.L."/>
            <person name="Jhaveri J."/>
            <person name="Lu J."/>
            <person name="Miller N.M."/>
            <person name="Norton S."/>
            <person name="Chen Q."/>
            <person name="Phoolcharoen W."/>
            <person name="Ohlin V."/>
            <person name="Ondrusek D."/>
            <person name="Pride N."/>
            <person name="Stricklin S.L."/>
            <person name="Sun J."/>
            <person name="Wheeler C."/>
            <person name="Wilson L."/>
            <person name="Zhu H."/>
            <person name="Wood D.W."/>
        </authorList>
    </citation>
    <scope>NUCLEOTIDE SEQUENCE [LARGE SCALE GENOMIC DNA]</scope>
    <source>
        <strain>ATCC BAA-846 / DSM 112012 / S4</strain>
    </source>
</reference>
<feature type="chain" id="PRO_1000196511" description="Small ribosomal subunit protein bS18">
    <location>
        <begin position="1"/>
        <end position="82"/>
    </location>
</feature>
<feature type="region of interest" description="Disordered" evidence="2">
    <location>
        <begin position="1"/>
        <end position="20"/>
    </location>
</feature>
<keyword id="KW-1185">Reference proteome</keyword>
<keyword id="KW-0687">Ribonucleoprotein</keyword>
<keyword id="KW-0689">Ribosomal protein</keyword>
<keyword id="KW-0694">RNA-binding</keyword>
<keyword id="KW-0699">rRNA-binding</keyword>
<gene>
    <name evidence="1" type="primary">rpsR</name>
    <name type="ordered locus">Avi_1519</name>
</gene>
<evidence type="ECO:0000255" key="1">
    <source>
        <dbReference type="HAMAP-Rule" id="MF_00270"/>
    </source>
</evidence>
<evidence type="ECO:0000256" key="2">
    <source>
        <dbReference type="SAM" id="MobiDB-lite"/>
    </source>
</evidence>
<evidence type="ECO:0000305" key="3"/>
<name>RS18_ALLAM</name>
<accession>B9JUU1</accession>
<sequence length="82" mass="9413">MAEVSSSTVRRPFHRRRKTCPFSGANAPKIDYKDVRLLQRYISERGKIVPSRITAVSQKKQRELAKAIKRARFLGLLPYVVA</sequence>
<comment type="function">
    <text evidence="1">Binds as a heterodimer with protein bS6 to the central domain of the 16S rRNA, where it helps stabilize the platform of the 30S subunit.</text>
</comment>
<comment type="subunit">
    <text evidence="1">Part of the 30S ribosomal subunit. Forms a tight heterodimer with protein bS6.</text>
</comment>
<comment type="similarity">
    <text evidence="1">Belongs to the bacterial ribosomal protein bS18 family.</text>
</comment>